<sequence>MANKPFFRRRKVCPFSGDNAPAIDYKDTRLLQRYISERGKIVPSRITAVSAKKQRELAAAIKRARFLALLPYAVK</sequence>
<keyword id="KW-0687">Ribonucleoprotein</keyword>
<keyword id="KW-0689">Ribosomal protein</keyword>
<keyword id="KW-0694">RNA-binding</keyword>
<keyword id="KW-0699">rRNA-binding</keyword>
<accession>A3PKL6</accession>
<protein>
    <recommendedName>
        <fullName evidence="1">Small ribosomal subunit protein bS18</fullName>
    </recommendedName>
    <alternativeName>
        <fullName evidence="2">30S ribosomal protein S18</fullName>
    </alternativeName>
</protein>
<reference key="1">
    <citation type="submission" date="2007-02" db="EMBL/GenBank/DDBJ databases">
        <title>Complete sequence of chromosome 1 of Rhodobacter sphaeroides ATCC 17029.</title>
        <authorList>
            <person name="Copeland A."/>
            <person name="Lucas S."/>
            <person name="Lapidus A."/>
            <person name="Barry K."/>
            <person name="Detter J.C."/>
            <person name="Glavina del Rio T."/>
            <person name="Hammon N."/>
            <person name="Israni S."/>
            <person name="Dalin E."/>
            <person name="Tice H."/>
            <person name="Pitluck S."/>
            <person name="Kiss H."/>
            <person name="Brettin T."/>
            <person name="Bruce D."/>
            <person name="Han C."/>
            <person name="Tapia R."/>
            <person name="Gilna P."/>
            <person name="Schmutz J."/>
            <person name="Larimer F."/>
            <person name="Land M."/>
            <person name="Hauser L."/>
            <person name="Kyrpides N."/>
            <person name="Mikhailova N."/>
            <person name="Richardson P."/>
            <person name="Mackenzie C."/>
            <person name="Choudhary M."/>
            <person name="Donohue T.J."/>
            <person name="Kaplan S."/>
        </authorList>
    </citation>
    <scope>NUCLEOTIDE SEQUENCE [LARGE SCALE GENOMIC DNA]</scope>
    <source>
        <strain>ATCC 17029 / ATH 2.4.9</strain>
    </source>
</reference>
<feature type="chain" id="PRO_1000003588" description="Small ribosomal subunit protein bS18">
    <location>
        <begin position="1"/>
        <end position="75"/>
    </location>
</feature>
<proteinExistence type="inferred from homology"/>
<comment type="function">
    <text evidence="1">Binds as a heterodimer with protein bS6 to the central domain of the 16S rRNA, where it helps stabilize the platform of the 30S subunit.</text>
</comment>
<comment type="subunit">
    <text evidence="1">Part of the 30S ribosomal subunit. Forms a tight heterodimer with protein bS6.</text>
</comment>
<comment type="similarity">
    <text evidence="1">Belongs to the bacterial ribosomal protein bS18 family.</text>
</comment>
<name>RS18_CERS1</name>
<organism>
    <name type="scientific">Cereibacter sphaeroides (strain ATCC 17029 / ATH 2.4.9)</name>
    <name type="common">Rhodobacter sphaeroides</name>
    <dbReference type="NCBI Taxonomy" id="349101"/>
    <lineage>
        <taxon>Bacteria</taxon>
        <taxon>Pseudomonadati</taxon>
        <taxon>Pseudomonadota</taxon>
        <taxon>Alphaproteobacteria</taxon>
        <taxon>Rhodobacterales</taxon>
        <taxon>Paracoccaceae</taxon>
        <taxon>Cereibacter</taxon>
    </lineage>
</organism>
<evidence type="ECO:0000255" key="1">
    <source>
        <dbReference type="HAMAP-Rule" id="MF_00270"/>
    </source>
</evidence>
<evidence type="ECO:0000305" key="2"/>
<gene>
    <name evidence="1" type="primary">rpsR</name>
    <name type="ordered locus">Rsph17029_1773</name>
</gene>
<dbReference type="EMBL" id="CP000577">
    <property type="protein sequence ID" value="ABN76882.1"/>
    <property type="molecule type" value="Genomic_DNA"/>
</dbReference>
<dbReference type="SMR" id="A3PKL6"/>
<dbReference type="KEGG" id="rsh:Rsph17029_1773"/>
<dbReference type="HOGENOM" id="CLU_148710_2_3_5"/>
<dbReference type="GO" id="GO:0022627">
    <property type="term" value="C:cytosolic small ribosomal subunit"/>
    <property type="evidence" value="ECO:0007669"/>
    <property type="project" value="TreeGrafter"/>
</dbReference>
<dbReference type="GO" id="GO:0070181">
    <property type="term" value="F:small ribosomal subunit rRNA binding"/>
    <property type="evidence" value="ECO:0007669"/>
    <property type="project" value="TreeGrafter"/>
</dbReference>
<dbReference type="GO" id="GO:0003735">
    <property type="term" value="F:structural constituent of ribosome"/>
    <property type="evidence" value="ECO:0007669"/>
    <property type="project" value="InterPro"/>
</dbReference>
<dbReference type="GO" id="GO:0006412">
    <property type="term" value="P:translation"/>
    <property type="evidence" value="ECO:0007669"/>
    <property type="project" value="UniProtKB-UniRule"/>
</dbReference>
<dbReference type="Gene3D" id="4.10.640.10">
    <property type="entry name" value="Ribosomal protein S18"/>
    <property type="match status" value="1"/>
</dbReference>
<dbReference type="HAMAP" id="MF_00270">
    <property type="entry name" value="Ribosomal_bS18"/>
    <property type="match status" value="1"/>
</dbReference>
<dbReference type="InterPro" id="IPR001648">
    <property type="entry name" value="Ribosomal_bS18"/>
</dbReference>
<dbReference type="InterPro" id="IPR018275">
    <property type="entry name" value="Ribosomal_bS18_CS"/>
</dbReference>
<dbReference type="InterPro" id="IPR036870">
    <property type="entry name" value="Ribosomal_bS18_sf"/>
</dbReference>
<dbReference type="NCBIfam" id="TIGR00165">
    <property type="entry name" value="S18"/>
    <property type="match status" value="1"/>
</dbReference>
<dbReference type="PANTHER" id="PTHR13479">
    <property type="entry name" value="30S RIBOSOMAL PROTEIN S18"/>
    <property type="match status" value="1"/>
</dbReference>
<dbReference type="PANTHER" id="PTHR13479:SF40">
    <property type="entry name" value="SMALL RIBOSOMAL SUBUNIT PROTEIN BS18M"/>
    <property type="match status" value="1"/>
</dbReference>
<dbReference type="Pfam" id="PF01084">
    <property type="entry name" value="Ribosomal_S18"/>
    <property type="match status" value="1"/>
</dbReference>
<dbReference type="PRINTS" id="PR00974">
    <property type="entry name" value="RIBOSOMALS18"/>
</dbReference>
<dbReference type="SUPFAM" id="SSF46911">
    <property type="entry name" value="Ribosomal protein S18"/>
    <property type="match status" value="1"/>
</dbReference>
<dbReference type="PROSITE" id="PS00057">
    <property type="entry name" value="RIBOSOMAL_S18"/>
    <property type="match status" value="1"/>
</dbReference>